<organism>
    <name type="scientific">Mus musculus</name>
    <name type="common">Mouse</name>
    <dbReference type="NCBI Taxonomy" id="10090"/>
    <lineage>
        <taxon>Eukaryota</taxon>
        <taxon>Metazoa</taxon>
        <taxon>Chordata</taxon>
        <taxon>Craniata</taxon>
        <taxon>Vertebrata</taxon>
        <taxon>Euteleostomi</taxon>
        <taxon>Mammalia</taxon>
        <taxon>Eutheria</taxon>
        <taxon>Euarchontoglires</taxon>
        <taxon>Glires</taxon>
        <taxon>Rodentia</taxon>
        <taxon>Myomorpha</taxon>
        <taxon>Muroidea</taxon>
        <taxon>Muridae</taxon>
        <taxon>Murinae</taxon>
        <taxon>Mus</taxon>
        <taxon>Mus</taxon>
    </lineage>
</organism>
<name>SEPR_MOUSE</name>
<proteinExistence type="evidence at protein level"/>
<feature type="chain" id="PRO_0000122425" description="Prolyl endopeptidase FAP" evidence="1">
    <location>
        <begin position="1"/>
        <end position="761"/>
    </location>
</feature>
<feature type="chain" id="PRO_0000430644" description="Antiplasmin-cleaving enzyme FAP, soluble form" evidence="1">
    <location>
        <begin position="24"/>
        <end position="761"/>
    </location>
</feature>
<feature type="topological domain" description="Cytoplasmic" evidence="1 2">
    <location>
        <begin position="1"/>
        <end position="4"/>
    </location>
</feature>
<feature type="transmembrane region" description="Helical; Signal-anchor for type II membrane protein" evidence="2">
    <location>
        <begin position="5"/>
        <end position="25"/>
    </location>
</feature>
<feature type="topological domain" description="Extracellular" evidence="1 2">
    <location>
        <begin position="26"/>
        <end position="761"/>
    </location>
</feature>
<feature type="active site" description="Charge relay system" evidence="1 4">
    <location>
        <position position="624"/>
    </location>
</feature>
<feature type="active site" description="Charge relay system" evidence="1">
    <location>
        <position position="702"/>
    </location>
</feature>
<feature type="active site" description="Charge relay system" evidence="1">
    <location>
        <position position="734"/>
    </location>
</feature>
<feature type="binding site" evidence="1">
    <location>
        <position position="203"/>
    </location>
    <ligand>
        <name>substrate</name>
    </ligand>
</feature>
<feature type="binding site" evidence="1">
    <location>
        <position position="204"/>
    </location>
    <ligand>
        <name>substrate</name>
    </ligand>
</feature>
<feature type="site" description="Cleavage" evidence="1">
    <location>
        <begin position="23"/>
        <end position="24"/>
    </location>
</feature>
<feature type="glycosylation site" description="N-linked (GlcNAc...) asparagine" evidence="1 3">
    <location>
        <position position="49"/>
    </location>
</feature>
<feature type="glycosylation site" description="N-linked (GlcNAc...) asparagine" evidence="1 3">
    <location>
        <position position="92"/>
    </location>
</feature>
<feature type="glycosylation site" description="N-linked (GlcNAc...) asparagine" evidence="1 3">
    <location>
        <position position="99"/>
    </location>
</feature>
<feature type="glycosylation site" description="N-linked (GlcNAc...) asparagine" evidence="1 3">
    <location>
        <position position="227"/>
    </location>
</feature>
<feature type="glycosylation site" description="N-linked (GlcNAc...) asparagine" evidence="1 3">
    <location>
        <position position="314"/>
    </location>
</feature>
<feature type="glycosylation site" description="N-linked (GlcNAc...) asparagine" evidence="3">
    <location>
        <position position="679"/>
    </location>
</feature>
<feature type="disulfide bond" evidence="1">
    <location>
        <begin position="321"/>
        <end position="332"/>
    </location>
</feature>
<feature type="disulfide bond" evidence="1">
    <location>
        <begin position="438"/>
        <end position="441"/>
    </location>
</feature>
<feature type="disulfide bond" evidence="1">
    <location>
        <begin position="448"/>
        <end position="466"/>
    </location>
</feature>
<feature type="disulfide bond" evidence="1">
    <location>
        <begin position="643"/>
        <end position="756"/>
    </location>
</feature>
<feature type="splice variant" id="VSP_005369" description="In isoform 3." evidence="13">
    <location>
        <begin position="31"/>
        <end position="63"/>
    </location>
</feature>
<feature type="splice variant" id="VSP_005368" description="In isoform 2." evidence="13">
    <location>
        <begin position="31"/>
        <end position="35"/>
    </location>
</feature>
<feature type="mutagenesis site" description="Localized at the cell surface, inhibits gelatinase and dipeptidyl peptidase activities and stimulates tumor suppression activity." evidence="7">
    <original>S</original>
    <variation>A</variation>
    <location>
        <position position="624"/>
    </location>
</feature>
<feature type="sequence conflict" description="In Ref. 3; AAH19190." evidence="14" ref="3">
    <original>S</original>
    <variation>L</variation>
    <location>
        <position position="737"/>
    </location>
</feature>
<accession>P97321</accession>
<evidence type="ECO:0000250" key="1">
    <source>
        <dbReference type="UniProtKB" id="Q12884"/>
    </source>
</evidence>
<evidence type="ECO:0000255" key="2"/>
<evidence type="ECO:0000255" key="3">
    <source>
        <dbReference type="PROSITE-ProRule" id="PRU00498"/>
    </source>
</evidence>
<evidence type="ECO:0000255" key="4">
    <source>
        <dbReference type="PROSITE-ProRule" id="PRU10084"/>
    </source>
</evidence>
<evidence type="ECO:0000269" key="5">
    <source>
    </source>
</evidence>
<evidence type="ECO:0000269" key="6">
    <source>
    </source>
</evidence>
<evidence type="ECO:0000269" key="7">
    <source>
    </source>
</evidence>
<evidence type="ECO:0000269" key="8">
    <source>
    </source>
</evidence>
<evidence type="ECO:0000269" key="9">
    <source>
    </source>
</evidence>
<evidence type="ECO:0000269" key="10">
    <source>
    </source>
</evidence>
<evidence type="ECO:0000269" key="11">
    <source>
    </source>
</evidence>
<evidence type="ECO:0000303" key="12">
    <source>
    </source>
</evidence>
<evidence type="ECO:0000303" key="13">
    <source>
    </source>
</evidence>
<evidence type="ECO:0000305" key="14"/>
<evidence type="ECO:0000312" key="15">
    <source>
        <dbReference type="MGI" id="MGI:109608"/>
    </source>
</evidence>
<keyword id="KW-0025">Alternative splicing</keyword>
<keyword id="KW-0037">Angiogenesis</keyword>
<keyword id="KW-0053">Apoptosis</keyword>
<keyword id="KW-0130">Cell adhesion</keyword>
<keyword id="KW-0965">Cell junction</keyword>
<keyword id="KW-1003">Cell membrane</keyword>
<keyword id="KW-0966">Cell projection</keyword>
<keyword id="KW-0165">Cleavage on pair of basic residues</keyword>
<keyword id="KW-1015">Disulfide bond</keyword>
<keyword id="KW-0325">Glycoprotein</keyword>
<keyword id="KW-0378">Hydrolase</keyword>
<keyword id="KW-0472">Membrane</keyword>
<keyword id="KW-0645">Protease</keyword>
<keyword id="KW-1185">Reference proteome</keyword>
<keyword id="KW-0964">Secreted</keyword>
<keyword id="KW-0720">Serine protease</keyword>
<keyword id="KW-0735">Signal-anchor</keyword>
<keyword id="KW-0812">Transmembrane</keyword>
<keyword id="KW-1133">Transmembrane helix</keyword>
<protein>
    <recommendedName>
        <fullName evidence="1">Prolyl endopeptidase FAP</fullName>
        <ecNumber evidence="10">3.4.21.26</ecNumber>
    </recommendedName>
    <alternativeName>
        <fullName evidence="1">Dipeptidyl peptidase FAP</fullName>
        <ecNumber evidence="5 6 7 11">3.4.14.5</ecNumber>
    </alternativeName>
    <alternativeName>
        <fullName evidence="1">Fibroblast activation protein alpha</fullName>
        <shortName evidence="12">FAPalpha</shortName>
    </alternativeName>
    <alternativeName>
        <fullName evidence="1">Gelatine degradation protease FAP</fullName>
        <ecNumber evidence="1">3.4.21.-</ecNumber>
    </alternativeName>
    <alternativeName>
        <fullName evidence="1">Integral membrane serine protease</fullName>
    </alternativeName>
    <alternativeName>
        <fullName evidence="14">Post-proline cleaving enzyme</fullName>
    </alternativeName>
    <alternativeName>
        <fullName evidence="1">Serine integral membrane protease</fullName>
        <shortName evidence="1">SIMP</shortName>
    </alternativeName>
    <alternativeName>
        <fullName evidence="1">Surface-expressed protease</fullName>
        <shortName evidence="1">Seprase</shortName>
    </alternativeName>
    <component>
        <recommendedName>
            <fullName evidence="1">Antiplasmin-cleaving enzyme FAP, soluble form</fullName>
            <shortName evidence="1">APCE</shortName>
            <ecNumber evidence="1">3.4.14.5</ecNumber>
            <ecNumber evidence="1">3.4.21.-</ecNumber>
            <ecNumber evidence="1">3.4.21.26</ecNumber>
        </recommendedName>
    </component>
</protein>
<gene>
    <name evidence="15" type="primary">Fap</name>
</gene>
<dbReference type="EC" id="3.4.21.26" evidence="10 1"/>
<dbReference type="EC" id="3.4.14.5" evidence="5 6 7 11 1"/>
<dbReference type="EC" id="3.4.21.-" evidence="1"/>
<dbReference type="EMBL" id="Y10007">
    <property type="protein sequence ID" value="CAA71116.1"/>
    <property type="molecule type" value="mRNA"/>
</dbReference>
<dbReference type="EMBL" id="BC019190">
    <property type="protein sequence ID" value="AAH19190.1"/>
    <property type="molecule type" value="mRNA"/>
</dbReference>
<dbReference type="CCDS" id="CCDS16067.1">
    <molecule id="P97321-1"/>
</dbReference>
<dbReference type="RefSeq" id="NP_032012.1">
    <molecule id="P97321-1"/>
    <property type="nucleotide sequence ID" value="NM_007986.3"/>
</dbReference>
<dbReference type="RefSeq" id="XP_006498809.1">
    <property type="nucleotide sequence ID" value="XM_006498746.3"/>
</dbReference>
<dbReference type="SMR" id="P97321"/>
<dbReference type="BioGRID" id="199593">
    <property type="interactions" value="2"/>
</dbReference>
<dbReference type="FunCoup" id="P97321">
    <property type="interactions" value="51"/>
</dbReference>
<dbReference type="STRING" id="10090.ENSMUSP00000099793"/>
<dbReference type="BindingDB" id="P97321"/>
<dbReference type="ChEMBL" id="CHEMBL5769"/>
<dbReference type="DrugCentral" id="P97321"/>
<dbReference type="ESTHER" id="mouse-FAP">
    <property type="family name" value="DPP4N_Peptidase_S9"/>
</dbReference>
<dbReference type="MEROPS" id="S09.007"/>
<dbReference type="GlyCosmos" id="P97321">
    <property type="glycosylation" value="6 sites, No reported glycans"/>
</dbReference>
<dbReference type="GlyGen" id="P97321">
    <property type="glycosylation" value="7 sites, 2 N-linked glycans (2 sites), 1 O-linked glycan (1 site)"/>
</dbReference>
<dbReference type="iPTMnet" id="P97321"/>
<dbReference type="PhosphoSitePlus" id="P97321"/>
<dbReference type="CPTAC" id="non-CPTAC-3745"/>
<dbReference type="PaxDb" id="10090-ENSMUSP00000099793"/>
<dbReference type="PeptideAtlas" id="P97321"/>
<dbReference type="ProteomicsDB" id="256618">
    <molecule id="P97321-1"/>
</dbReference>
<dbReference type="ProteomicsDB" id="256619">
    <molecule id="P97321-2"/>
</dbReference>
<dbReference type="ProteomicsDB" id="256620">
    <molecule id="P97321-3"/>
</dbReference>
<dbReference type="ABCD" id="P97321">
    <property type="antibodies" value="1 sequenced antibody"/>
</dbReference>
<dbReference type="Antibodypedia" id="33750">
    <property type="antibodies" value="701 antibodies from 45 providers"/>
</dbReference>
<dbReference type="DNASU" id="14089"/>
<dbReference type="Ensembl" id="ENSMUST00000000402.16">
    <molecule id="P97321-3"/>
    <property type="protein sequence ID" value="ENSMUSP00000000402.10"/>
    <property type="gene ID" value="ENSMUSG00000000392.18"/>
</dbReference>
<dbReference type="Ensembl" id="ENSMUST00000102732.10">
    <molecule id="P97321-1"/>
    <property type="protein sequence ID" value="ENSMUSP00000099793.4"/>
    <property type="gene ID" value="ENSMUSG00000000392.18"/>
</dbReference>
<dbReference type="Ensembl" id="ENSMUST00000174448.8">
    <molecule id="P97321-2"/>
    <property type="protein sequence ID" value="ENSMUSP00000134386.2"/>
    <property type="gene ID" value="ENSMUSG00000000392.18"/>
</dbReference>
<dbReference type="GeneID" id="14089"/>
<dbReference type="KEGG" id="mmu:14089"/>
<dbReference type="UCSC" id="uc008jvk.2">
    <molecule id="P97321-1"/>
    <property type="organism name" value="mouse"/>
</dbReference>
<dbReference type="UCSC" id="uc008jvl.1">
    <molecule id="P97321-3"/>
    <property type="organism name" value="mouse"/>
</dbReference>
<dbReference type="AGR" id="MGI:109608"/>
<dbReference type="CTD" id="2191"/>
<dbReference type="MGI" id="MGI:109608">
    <property type="gene designation" value="Fap"/>
</dbReference>
<dbReference type="VEuPathDB" id="HostDB:ENSMUSG00000000392"/>
<dbReference type="eggNOG" id="KOG2100">
    <property type="taxonomic scope" value="Eukaryota"/>
</dbReference>
<dbReference type="GeneTree" id="ENSGT00940000160454"/>
<dbReference type="HOGENOM" id="CLU_006105_4_3_1"/>
<dbReference type="InParanoid" id="P97321"/>
<dbReference type="OMA" id="MRTPQEN"/>
<dbReference type="OrthoDB" id="16520at2759"/>
<dbReference type="PhylomeDB" id="P97321"/>
<dbReference type="TreeFam" id="TF313309"/>
<dbReference type="BRENDA" id="3.4.21.B28">
    <property type="organism ID" value="3474"/>
</dbReference>
<dbReference type="BioGRID-ORCS" id="14089">
    <property type="hits" value="2 hits in 79 CRISPR screens"/>
</dbReference>
<dbReference type="PRO" id="PR:P97321"/>
<dbReference type="Proteomes" id="UP000000589">
    <property type="component" value="Chromosome 2"/>
</dbReference>
<dbReference type="RNAct" id="P97321">
    <property type="molecule type" value="protein"/>
</dbReference>
<dbReference type="Bgee" id="ENSMUSG00000000392">
    <property type="expression patterns" value="Expressed in diaphysis of femur and 219 other cell types or tissues"/>
</dbReference>
<dbReference type="ExpressionAtlas" id="P97321">
    <property type="expression patterns" value="baseline and differential"/>
</dbReference>
<dbReference type="GO" id="GO:0070161">
    <property type="term" value="C:anchoring junction"/>
    <property type="evidence" value="ECO:0007669"/>
    <property type="project" value="UniProtKB-KW"/>
</dbReference>
<dbReference type="GO" id="GO:0045177">
    <property type="term" value="C:apical part of cell"/>
    <property type="evidence" value="ECO:0000314"/>
    <property type="project" value="MGI"/>
</dbReference>
<dbReference type="GO" id="GO:0045178">
    <property type="term" value="C:basal part of cell"/>
    <property type="evidence" value="ECO:0000314"/>
    <property type="project" value="MGI"/>
</dbReference>
<dbReference type="GO" id="GO:0009986">
    <property type="term" value="C:cell surface"/>
    <property type="evidence" value="ECO:0000314"/>
    <property type="project" value="UniProtKB"/>
</dbReference>
<dbReference type="GO" id="GO:0005615">
    <property type="term" value="C:extracellular space"/>
    <property type="evidence" value="ECO:0007669"/>
    <property type="project" value="Ensembl"/>
</dbReference>
<dbReference type="GO" id="GO:0031258">
    <property type="term" value="C:lamellipodium membrane"/>
    <property type="evidence" value="ECO:0007669"/>
    <property type="project" value="UniProtKB-SubCell"/>
</dbReference>
<dbReference type="GO" id="GO:1905368">
    <property type="term" value="C:peptidase complex"/>
    <property type="evidence" value="ECO:0007669"/>
    <property type="project" value="Ensembl"/>
</dbReference>
<dbReference type="GO" id="GO:0005886">
    <property type="term" value="C:plasma membrane"/>
    <property type="evidence" value="ECO:0000250"/>
    <property type="project" value="UniProtKB"/>
</dbReference>
<dbReference type="GO" id="GO:0032587">
    <property type="term" value="C:ruffle membrane"/>
    <property type="evidence" value="ECO:0007669"/>
    <property type="project" value="UniProtKB-SubCell"/>
</dbReference>
<dbReference type="GO" id="GO:0008239">
    <property type="term" value="F:dipeptidyl-peptidase activity"/>
    <property type="evidence" value="ECO:0000250"/>
    <property type="project" value="UniProtKB"/>
</dbReference>
<dbReference type="GO" id="GO:0005178">
    <property type="term" value="F:integrin binding"/>
    <property type="evidence" value="ECO:0007669"/>
    <property type="project" value="Ensembl"/>
</dbReference>
<dbReference type="GO" id="GO:0008233">
    <property type="term" value="F:peptidase activity"/>
    <property type="evidence" value="ECO:0000314"/>
    <property type="project" value="MGI"/>
</dbReference>
<dbReference type="GO" id="GO:0002020">
    <property type="term" value="F:protease binding"/>
    <property type="evidence" value="ECO:0007669"/>
    <property type="project" value="Ensembl"/>
</dbReference>
<dbReference type="GO" id="GO:0042803">
    <property type="term" value="F:protein homodimerization activity"/>
    <property type="evidence" value="ECO:0000250"/>
    <property type="project" value="UniProtKB"/>
</dbReference>
<dbReference type="GO" id="GO:0004252">
    <property type="term" value="F:serine-type endopeptidase activity"/>
    <property type="evidence" value="ECO:0000250"/>
    <property type="project" value="UniProtKB"/>
</dbReference>
<dbReference type="GO" id="GO:0008236">
    <property type="term" value="F:serine-type peptidase activity"/>
    <property type="evidence" value="ECO:0000250"/>
    <property type="project" value="UniProtKB"/>
</dbReference>
<dbReference type="GO" id="GO:0001525">
    <property type="term" value="P:angiogenesis"/>
    <property type="evidence" value="ECO:0007669"/>
    <property type="project" value="UniProtKB-KW"/>
</dbReference>
<dbReference type="GO" id="GO:0007155">
    <property type="term" value="P:cell adhesion"/>
    <property type="evidence" value="ECO:0007669"/>
    <property type="project" value="UniProtKB-KW"/>
</dbReference>
<dbReference type="GO" id="GO:0043542">
    <property type="term" value="P:endothelial cell migration"/>
    <property type="evidence" value="ECO:0000250"/>
    <property type="project" value="UniProtKB"/>
</dbReference>
<dbReference type="GO" id="GO:1902362">
    <property type="term" value="P:melanocyte apoptotic process"/>
    <property type="evidence" value="ECO:0000314"/>
    <property type="project" value="UniProtKB"/>
</dbReference>
<dbReference type="GO" id="GO:0097325">
    <property type="term" value="P:melanocyte proliferation"/>
    <property type="evidence" value="ECO:0000314"/>
    <property type="project" value="UniProtKB"/>
</dbReference>
<dbReference type="GO" id="GO:0060244">
    <property type="term" value="P:negative regulation of cell proliferation involved in contact inhibition"/>
    <property type="evidence" value="ECO:0000314"/>
    <property type="project" value="UniProtKB"/>
</dbReference>
<dbReference type="GO" id="GO:0010716">
    <property type="term" value="P:negative regulation of extracellular matrix disassembly"/>
    <property type="evidence" value="ECO:0000250"/>
    <property type="project" value="UniProtKB"/>
</dbReference>
<dbReference type="GO" id="GO:1903054">
    <property type="term" value="P:negative regulation of extracellular matrix organization"/>
    <property type="evidence" value="ECO:0000250"/>
    <property type="project" value="UniProtKB"/>
</dbReference>
<dbReference type="GO" id="GO:1900119">
    <property type="term" value="P:positive regulation of execution phase of apoptosis"/>
    <property type="evidence" value="ECO:0000314"/>
    <property type="project" value="UniProtKB"/>
</dbReference>
<dbReference type="GO" id="GO:0006508">
    <property type="term" value="P:proteolysis"/>
    <property type="evidence" value="ECO:0000250"/>
    <property type="project" value="UniProtKB"/>
</dbReference>
<dbReference type="GO" id="GO:0051603">
    <property type="term" value="P:proteolysis involved in protein catabolic process"/>
    <property type="evidence" value="ECO:0000250"/>
    <property type="project" value="UniProtKB"/>
</dbReference>
<dbReference type="GO" id="GO:0051726">
    <property type="term" value="P:regulation of cell cycle"/>
    <property type="evidence" value="ECO:0000314"/>
    <property type="project" value="UniProtKB"/>
</dbReference>
<dbReference type="GO" id="GO:0010710">
    <property type="term" value="P:regulation of collagen catabolic process"/>
    <property type="evidence" value="ECO:0000250"/>
    <property type="project" value="UniProtKB"/>
</dbReference>
<dbReference type="FunFam" id="2.140.10.30:FF:000001">
    <property type="entry name" value="Dipeptidyl peptidase 4"/>
    <property type="match status" value="1"/>
</dbReference>
<dbReference type="FunFam" id="3.40.50.1820:FF:000003">
    <property type="entry name" value="Dipeptidyl peptidase 4"/>
    <property type="match status" value="1"/>
</dbReference>
<dbReference type="Gene3D" id="3.40.50.1820">
    <property type="entry name" value="alpha/beta hydrolase"/>
    <property type="match status" value="1"/>
</dbReference>
<dbReference type="Gene3D" id="2.140.10.30">
    <property type="entry name" value="Dipeptidylpeptidase IV, N-terminal domain"/>
    <property type="match status" value="1"/>
</dbReference>
<dbReference type="InterPro" id="IPR029058">
    <property type="entry name" value="AB_hydrolase_fold"/>
</dbReference>
<dbReference type="InterPro" id="IPR002471">
    <property type="entry name" value="Pept_S9_AS"/>
</dbReference>
<dbReference type="InterPro" id="IPR001375">
    <property type="entry name" value="Peptidase_S9_cat"/>
</dbReference>
<dbReference type="InterPro" id="IPR002469">
    <property type="entry name" value="Peptidase_S9B_N"/>
</dbReference>
<dbReference type="InterPro" id="IPR050278">
    <property type="entry name" value="Serine_Prot_S9B/DPPIV"/>
</dbReference>
<dbReference type="PANTHER" id="PTHR11731:SF136">
    <property type="entry name" value="PROLYL ENDOPEPTIDASE FAP"/>
    <property type="match status" value="1"/>
</dbReference>
<dbReference type="PANTHER" id="PTHR11731">
    <property type="entry name" value="PROTEASE FAMILY S9B,C DIPEPTIDYL-PEPTIDASE IV-RELATED"/>
    <property type="match status" value="1"/>
</dbReference>
<dbReference type="Pfam" id="PF00930">
    <property type="entry name" value="DPPIV_N"/>
    <property type="match status" value="1"/>
</dbReference>
<dbReference type="Pfam" id="PF00326">
    <property type="entry name" value="Peptidase_S9"/>
    <property type="match status" value="1"/>
</dbReference>
<dbReference type="SUPFAM" id="SSF53474">
    <property type="entry name" value="alpha/beta-Hydrolases"/>
    <property type="match status" value="1"/>
</dbReference>
<dbReference type="SUPFAM" id="SSF82171">
    <property type="entry name" value="DPP6 N-terminal domain-like"/>
    <property type="match status" value="1"/>
</dbReference>
<comment type="function">
    <text evidence="5 6 7 8 9 10 11">Cell surface glycoprotein serine protease that participates in extracellular matrix degradation and involved in many cellular processes including tissue remodeling, fibrosis, wound healing, inflammation and tumor growth. Both plasma membrane and soluble forms exhibit post-proline cleaving endopeptidase activity, with a marked preference for Ala/Ser-Gly-Pro-Ser/Asn/Ala consensus sequences, on substrate such as alpha-2-antiplasmin SERPINF2 and SPRY2. Degrade also gelatin, heat-denatured type I collagen, but not native collagen type I and IV, vibronectin, tenascin, laminin, fibronectin, fibrin or casein. Also has dipeptidyl peptidase activity, exhibiting the ability to hydrolyze the prolyl bond two residues from the N-terminus of synthetic dipeptide substrates provided that the penultimate residue is proline, with a preference for Ala-Pro, Ile-Pro, Gly-Pro, Arg-Pro and Pro-Pro. Natural neuropeptide hormones for dipeptidyl peptidase are the neuropeptide Y (NPY), peptide YY (PYY), substance P (TAC1) and brain natriuretic peptide 32 (NPPB). The plasma membrane form, in association with either DPP4, PLAUR or integrins, is involved in the pericellular proteolysis of the extracellular matrix (ECM), and hence promotes cell adhesion, migration and invasion through the ECM. Plays a role in tissue remodeling during development and wound healing. Participates in the cell invasiveness towards the ECM in malignant melanoma cancers. Enhances tumor growth progression by increasing angiogenesis, collagen fiber degradation and apoptosis and by reducing antitumor response of the immune system. Promotes glioma cell invasion through the brain parenchyma by degrading the proteoglycan brevican. Acts as a tumor suppressor in melanocytic cells through regulation of cell proliferation and survival in a serine protease activity-independent manner.</text>
</comment>
<comment type="catalytic activity">
    <reaction evidence="10">
        <text>Hydrolysis of Pro-|-Xaa &gt;&gt; Ala-|-Xaa in oligopeptides.</text>
        <dbReference type="EC" id="3.4.21.26"/>
    </reaction>
</comment>
<comment type="catalytic activity">
    <reaction evidence="4 5 6 7 11">
        <text>Release of an N-terminal dipeptide, Xaa-Yaa-|-Zaa-, from a polypeptide, preferentially when Yaa is Pro, provided Zaa is neither Pro nor hydroxyproline.</text>
        <dbReference type="EC" id="3.4.14.5"/>
    </reaction>
</comment>
<comment type="activity regulation">
    <text evidence="1">Gelatinase activity is inhibited by serine-protease inhibitors, such as phenylmethylsulfonyl fluoride (PMSF), 4-(2-aminoethyl)-benzenesulfonyl fluoride hydrochloride (AEBSF), 4-amidino phenylsulfonyl fluoride (APSF) and diisopropyl fluorophosphate (DFP), N-ethylmaleimide (NEM) and phenylmethylsulfonyl fluoride (PMSF). Dipeptidyl peptidase activity is inhibited by 2,2'-azino-bis(3-ethylbenzthiazoline-6-sulfonic acid), diisopropylfluorophosphate (DFP). Prolyl endopeptidase activity is inhibited by the boronic acid peptide Ac-Gly-BoroPro, Ac-Gly-Pro-chloromethyl ketone and Thr-Ser-Gly-chloromethyl ketone.</text>
</comment>
<comment type="subunit">
    <text evidence="1">Homodimer; homodimerization is required for activity of both plasma membrane and soluble forms. The monomer is inactive. Heterodimer with DPP4. Interacts with PLAUR; the interaction occurs at the cell surface of invadopodia membranes. Interacts with ITGB1. Interacts with ITGA3. Associates with integrin alpha-3/beta-1; the association occurs in a collagen-dependent manner at the cell surface of invadopodia membranes.</text>
</comment>
<comment type="subcellular location">
    <molecule>Prolyl endopeptidase FAP</molecule>
    <subcellularLocation>
        <location evidence="7">Cell surface</location>
    </subcellularLocation>
    <subcellularLocation>
        <location evidence="1">Cell membrane</location>
        <topology evidence="2">Single-pass type II membrane protein</topology>
    </subcellularLocation>
    <subcellularLocation>
        <location evidence="1">Cell projection</location>
        <location evidence="1">Lamellipodium membrane</location>
        <topology evidence="2">Single-pass type II membrane protein</topology>
    </subcellularLocation>
    <subcellularLocation>
        <location evidence="1">Cell projection</location>
        <location evidence="1">Invadopodium membrane</location>
        <topology evidence="2">Single-pass type II membrane protein</topology>
    </subcellularLocation>
    <subcellularLocation>
        <location evidence="1">Cell projection</location>
        <location evidence="1">Ruffle membrane</location>
        <topology evidence="2">Single-pass type II membrane protein</topology>
    </subcellularLocation>
    <subcellularLocation>
        <location evidence="1">Membrane</location>
        <topology evidence="2">Single-pass type II membrane protein</topology>
    </subcellularLocation>
    <text evidence="1">Localized on cell surface with lamellipodia and invadopodia membranes and on shed vesicles. Colocalized with DPP4 at invadopodia and lamellipodia membranes of migratory activated endothelial cells in collagenous matrix. Colocalized with DPP4 on endothelial cells of capillary-like microvessels but not large vessels within invasive breast ductal carcinoma. Anchored and enriched preferentially by integrin alpha-3/beta-1 at invadopodia, plasma membrane protrusions that correspond to sites of cell invasion, in a collagen-dependent manner. Localized at plasma and ruffle membranes in a collagen-independent manner. Colocalized with PLAUR preferentially at the cell surface of invadopodia membranes in a cytoskeleton-, integrin- and vitronectin-dependent manner. Concentrated at invadopodia membranes, specialized protrusions of the ventral plasma membrane in a fibrobectin-dependent manner. Colocalizes with extracellular components (ECM), such as collagen fibers and fibronectin.</text>
</comment>
<comment type="subcellular location">
    <molecule>Antiplasmin-cleaving enzyme FAP, soluble form</molecule>
    <subcellularLocation>
        <location evidence="10">Secreted</location>
    </subcellularLocation>
    <text evidence="10">Found in blood plasma and serum.</text>
</comment>
<comment type="alternative products">
    <event type="alternative splicing"/>
    <isoform>
        <id>P97321-1</id>
        <name>1</name>
        <sequence type="displayed"/>
    </isoform>
    <isoform>
        <id>P97321-2</id>
        <name>2</name>
        <sequence type="described" ref="VSP_005368"/>
    </isoform>
    <isoform>
        <id>P97321-3</id>
        <name>3</name>
        <sequence type="described" ref="VSP_005369"/>
    </isoform>
</comment>
<comment type="tissue specificity">
    <text evidence="7 8 10">Expressed strongly in uterus, pancreas, submaxillary gland and skin, less in lymph node, ovary, skeletal muscle, adrenal and bone marrow. Expressed in reactive stromal fibroblast in epithelial cancers. Expressed in melanocytes but not melanomas (at protein level). Detected in fibroblasts, in placenta, uterus, embryos from day 7-19 and in newborn mice (P1).</text>
</comment>
<comment type="developmental stage">
    <text evidence="5 6">Expressed in developing myotubes at 11.5 dpc. Expressed in the dermomyotome component of the somites at 12.5 dpc. Expressed in fibroblasts at 13 dpc. Expressed in the perichondrial mesenchymal cells from the cartilage primordium of the ribs and in the scattered developing intercostal muscle fibs at 16.5 dpc (at protein level). Expressed in the primitive mesenchymal condensation adjacent to the eye and in primitive mesenchymal cells surrounding the cartilaginous primordia of the bones at 13.5 dpc.</text>
</comment>
<comment type="PTM">
    <text evidence="1">N-glycosylated.</text>
</comment>
<comment type="PTM">
    <text evidence="1">The N-terminus may be blocked.</text>
</comment>
<comment type="disruption phenotype">
    <text evidence="5">No visible phenotype. Mice are viable and fertile and display no overt developmental defects and no general change in cancer susceptibility.</text>
</comment>
<comment type="similarity">
    <text evidence="14">Belongs to the peptidase S9B family.</text>
</comment>
<reference key="1">
    <citation type="journal article" date="1997" name="Int. J. Cancer">
        <title>Mouse fibroblast activation protein: molecular cloning, alternative splicing and expression in the reactive stroma of epithelial cancers.</title>
        <authorList>
            <person name="Niedermeyer J."/>
            <person name="Scanlan M.J."/>
            <person name="Garin-Chesa P."/>
            <person name="Daiber C."/>
            <person name="Fiebig H.H."/>
            <person name="Old L.J."/>
            <person name="Rettig W.J."/>
            <person name="Schnapp A."/>
        </authorList>
    </citation>
    <scope>NUCLEOTIDE SEQUENCE [MRNA] (ISOFORMS 1; 2 AND 3)</scope>
    <source>
        <strain>BALB/cJ</strain>
        <tissue>Embryo</tissue>
    </source>
</reference>
<reference key="2">
    <citation type="journal article" date="1998" name="Eur. J. Biochem.">
        <title>Mouse fibroblast-activation protein--conserved Fap gene organization and biochemical function as a serine protease.</title>
        <authorList>
            <person name="Niedermeyer J."/>
            <person name="Enenkel B."/>
            <person name="Park J.E."/>
            <person name="Lenter M."/>
            <person name="Rettig W.J."/>
            <person name="Damm K."/>
            <person name="Schnapp A."/>
        </authorList>
    </citation>
    <scope>NUCLEOTIDE SEQUENCE [GENOMIC DNA / MRNA]</scope>
    <scope>FUNCTION</scope>
    <scope>CATALYTIC ACTIVITY</scope>
</reference>
<reference key="3">
    <citation type="journal article" date="2004" name="Genome Res.">
        <title>The status, quality, and expansion of the NIH full-length cDNA project: the Mammalian Gene Collection (MGC).</title>
        <authorList>
            <consortium name="The MGC Project Team"/>
        </authorList>
    </citation>
    <scope>NUCLEOTIDE SEQUENCE [LARGE SCALE MRNA] (ISOFORM 1)</scope>
    <source>
        <tissue>Mammary gland</tissue>
    </source>
</reference>
<reference key="4">
    <citation type="journal article" date="2000" name="Mol. Cell. Biol.">
        <title>Targeted disruption of mouse fibroblast activation protein.</title>
        <authorList>
            <person name="Niedermeyer J."/>
            <person name="Kriz M."/>
            <person name="Hilberg F."/>
            <person name="Garin-Chesa P."/>
            <person name="Bamberger U."/>
            <person name="Lenter M.C."/>
            <person name="Park J."/>
            <person name="Viertel B."/>
            <person name="Puschner H."/>
            <person name="Mauz M."/>
            <person name="Rettig W.J."/>
            <person name="Schnapp A."/>
        </authorList>
    </citation>
    <scope>FUNCTION</scope>
    <scope>DISRUPTION PHENOTYPE</scope>
    <scope>CATALYTIC ACTIVITY</scope>
    <scope>DEVELOPMENTAL STAGE</scope>
</reference>
<reference key="5">
    <citation type="journal article" date="2001" name="Int. J. Dev. Biol.">
        <title>Expression of the fibroblast activation protein during mouse embryo development.</title>
        <authorList>
            <person name="Niedermeyer J."/>
            <person name="Garin-Chesa P."/>
            <person name="Kriz M."/>
            <person name="Hilberg F."/>
            <person name="Mueller E."/>
            <person name="Bamberger U."/>
            <person name="Rettig W.J."/>
            <person name="Schnapp A."/>
        </authorList>
    </citation>
    <scope>FUNCTION</scope>
    <scope>CATALYTIC ACTIVITY</scope>
    <scope>DEVELOPMENTAL STAGE</scope>
</reference>
<reference key="6">
    <citation type="journal article" date="2004" name="Oncogene">
        <title>FAPalpha, a surface peptidase expressed during wound healing, is a tumor suppressor.</title>
        <authorList>
            <person name="Ramirez-Montagut T."/>
            <person name="Blachere N.E."/>
            <person name="Sviderskaya E.V."/>
            <person name="Bennett D.C."/>
            <person name="Rettig W.J."/>
            <person name="Garin-Chesa P."/>
            <person name="Houghton A.N."/>
        </authorList>
    </citation>
    <scope>FUNCTION</scope>
    <scope>CATALYTIC ACTIVITY</scope>
    <scope>TISSUE SPECIFICITY</scope>
    <scope>MUTAGENESIS OF SER-624</scope>
</reference>
<reference key="7">
    <citation type="journal article" date="2010" name="Science">
        <title>Suppression of antitumor immunity by stromal cells expressing fibroblast activation protein-alpha.</title>
        <authorList>
            <person name="Kraman M."/>
            <person name="Bambrough P.J."/>
            <person name="Arnold J.N."/>
            <person name="Roberts E.W."/>
            <person name="Magiera L."/>
            <person name="Jones J.O."/>
            <person name="Gopinathan A."/>
            <person name="Tuveson D.A."/>
            <person name="Fearon D.T."/>
        </authorList>
    </citation>
    <scope>FUNCTION</scope>
    <scope>TISSUE SPECIFICITY</scope>
</reference>
<reference key="8">
    <citation type="journal article" date="2013" name="BMB Rep.">
        <title>Short hairpin RNA targeting of fibroblast activation protein inhibits tumor growth and improves the tumor microenvironment in a mouse model.</title>
        <authorList>
            <person name="Cai F."/>
            <person name="Li Z."/>
            <person name="Wang C."/>
            <person name="Xian S."/>
            <person name="Xu G."/>
            <person name="Peng F."/>
            <person name="Wei Y."/>
            <person name="Lu Y."/>
        </authorList>
    </citation>
    <scope>FUNCTION</scope>
</reference>
<reference key="9">
    <citation type="journal article" date="2013" name="FEBS Open Bio">
        <title>Quantitation of fibroblast activation protein (FAP)-specific protease activity in mouse, baboon and human fluids and organs.</title>
        <authorList>
            <person name="Keane F.M."/>
            <person name="Yao T.W."/>
            <person name="Seelk S."/>
            <person name="Gall M.G."/>
            <person name="Chowdhury S."/>
            <person name="Poplawski S.E."/>
            <person name="Lai J.H."/>
            <person name="Li Y."/>
            <person name="Wu W."/>
            <person name="Farrell P."/>
            <person name="Vieira de Ribeiro A.J."/>
            <person name="Osborne B."/>
            <person name="Yu D.M."/>
            <person name="Seth D."/>
            <person name="Rahman K."/>
            <person name="Haber P."/>
            <person name="Topaloglu A.K."/>
            <person name="Wang C."/>
            <person name="Thomson S."/>
            <person name="Hennessy A."/>
            <person name="Prins J."/>
            <person name="Twigg S.M."/>
            <person name="McLennan S.V."/>
            <person name="McCaughan G.W."/>
            <person name="Bachovchin W.W."/>
            <person name="Gorrell M.D."/>
        </authorList>
    </citation>
    <scope>FUNCTION</scope>
    <scope>CATALYTIC ACTIVITY</scope>
    <scope>SUBCELLULAR LOCATION</scope>
    <scope>TISSUE SPECIFICITY</scope>
</reference>
<sequence length="761" mass="87945">MKTWLKTVFGVTTLAALALVVICIVLRPSRVYKPEGNTKRALTLKDILNGTFSYKTYFPNWISEQEYLHQSEDDNIVFYNIETRESYIILSNSTMKSVNATDYGLSPDRQFVYLESDYSKLWRYSYTATYYIYDLQNGEFVRGYELPRPIQYLCWSPVGSKLAYVYQNNIYLKQRPGDPPFQITYTGRENRIFNGIPDWVYEEEMLATKYALWWSPDGKFLAYVEFNDSDIPIIAYSYYGDGQYPRTINIPYPKAGAKNPVVRVFIVDTTYPHHVGPMEVPVPEMIASSDYYFSWLTWVSSERVCLQWLKRVQNVSVLSICDFREDWHAWECPKNQEHVEESRTGWAGGFFVSTPAFSQDATSYYKIFSDKDGYKHIHYIKDTVENAIQITSGKWEAIYIFRVTQDSLFYSSNEFEGYPGRRNIYRISIGNSPPSKKCVTCHLRKERCQYYTASFSYKAKYYALVCYGPGLPISTLHDGRTDQEIQVLEENKELENSLRNIQLPKVEIKKLKDGGLTFWYKMILPPQFDRSKKYPLLIQVYGGPCSQSVKSVFAVNWITYLASKEGIVIALVDGRGTAFQGDKFLHAVYRKLGVYEVEDQLTAVRKFIEMGFIDEERIAIWGWSYGGYVSSLALASGTGLFKCGIAVAPVSSWEYYASIYSERFMGLPTKDDNLEHYKNSTVMARAEYFRNVDYLLIHGTADDNVHFQNSAQIAKALVNAQVDFQAMWYSDQNHGISSGRSQNHLYTHMTHFLKQCFSLSD</sequence>